<reference key="1">
    <citation type="submission" date="2000-07" db="EMBL/GenBank/DDBJ databases">
        <title>Human GBP-4 and -5: new members of the IFN-gamma-inducible guanylate binding protein family.</title>
        <authorList>
            <person name="Avdalovic A."/>
            <person name="Fu H."/>
            <person name="Tsurushita N."/>
        </authorList>
    </citation>
    <scope>NUCLEOTIDE SEQUENCE [MRNA] (ISOFORM 1)</scope>
</reference>
<reference key="2">
    <citation type="journal article" date="2004" name="J. Invest. Dermatol.">
        <title>GBP-5 splicing variants: New guanylate-binding proteins with tumor-associated expression and antigenicity.</title>
        <authorList>
            <person name="Fellenberg F."/>
            <person name="Hartmann T.B."/>
            <person name="Dummer R."/>
            <person name="Usener D."/>
            <person name="Schadendorf D."/>
            <person name="Eichmuller S."/>
        </authorList>
    </citation>
    <scope>NUCLEOTIDE SEQUENCE [MRNA] (ISOFORMS 1 AND 2)</scope>
    <scope>ALTERNATIVE SPLICING</scope>
    <scope>FUNCTION (ISOFORM 2)</scope>
    <scope>TISSUE SPECIFICITY</scope>
    <source>
        <tissue>Lymphoma</tissue>
    </source>
</reference>
<reference key="3">
    <citation type="journal article" date="2003" name="Genome Res.">
        <title>The secreted protein discovery initiative (SPDI), a large-scale effort to identify novel human secreted and transmembrane proteins: a bioinformatics assessment.</title>
        <authorList>
            <person name="Clark H.F."/>
            <person name="Gurney A.L."/>
            <person name="Abaya E."/>
            <person name="Baker K."/>
            <person name="Baldwin D.T."/>
            <person name="Brush J."/>
            <person name="Chen J."/>
            <person name="Chow B."/>
            <person name="Chui C."/>
            <person name="Crowley C."/>
            <person name="Currell B."/>
            <person name="Deuel B."/>
            <person name="Dowd P."/>
            <person name="Eaton D."/>
            <person name="Foster J.S."/>
            <person name="Grimaldi C."/>
            <person name="Gu Q."/>
            <person name="Hass P.E."/>
            <person name="Heldens S."/>
            <person name="Huang A."/>
            <person name="Kim H.S."/>
            <person name="Klimowski L."/>
            <person name="Jin Y."/>
            <person name="Johnson S."/>
            <person name="Lee J."/>
            <person name="Lewis L."/>
            <person name="Liao D."/>
            <person name="Mark M.R."/>
            <person name="Robbie E."/>
            <person name="Sanchez C."/>
            <person name="Schoenfeld J."/>
            <person name="Seshagiri S."/>
            <person name="Simmons L."/>
            <person name="Singh J."/>
            <person name="Smith V."/>
            <person name="Stinson J."/>
            <person name="Vagts A."/>
            <person name="Vandlen R.L."/>
            <person name="Watanabe C."/>
            <person name="Wieand D."/>
            <person name="Woods K."/>
            <person name="Xie M.-H."/>
            <person name="Yansura D.G."/>
            <person name="Yi S."/>
            <person name="Yu G."/>
            <person name="Yuan J."/>
            <person name="Zhang M."/>
            <person name="Zhang Z."/>
            <person name="Goddard A.D."/>
            <person name="Wood W.I."/>
            <person name="Godowski P.J."/>
            <person name="Gray A.M."/>
        </authorList>
    </citation>
    <scope>NUCLEOTIDE SEQUENCE [LARGE SCALE MRNA] (ISOFORM 1)</scope>
</reference>
<reference key="4">
    <citation type="journal article" date="2004" name="Nat. Genet.">
        <title>Complete sequencing and characterization of 21,243 full-length human cDNAs.</title>
        <authorList>
            <person name="Ota T."/>
            <person name="Suzuki Y."/>
            <person name="Nishikawa T."/>
            <person name="Otsuki T."/>
            <person name="Sugiyama T."/>
            <person name="Irie R."/>
            <person name="Wakamatsu A."/>
            <person name="Hayashi K."/>
            <person name="Sato H."/>
            <person name="Nagai K."/>
            <person name="Kimura K."/>
            <person name="Makita H."/>
            <person name="Sekine M."/>
            <person name="Obayashi M."/>
            <person name="Nishi T."/>
            <person name="Shibahara T."/>
            <person name="Tanaka T."/>
            <person name="Ishii S."/>
            <person name="Yamamoto J."/>
            <person name="Saito K."/>
            <person name="Kawai Y."/>
            <person name="Isono Y."/>
            <person name="Nakamura Y."/>
            <person name="Nagahari K."/>
            <person name="Murakami K."/>
            <person name="Yasuda T."/>
            <person name="Iwayanagi T."/>
            <person name="Wagatsuma M."/>
            <person name="Shiratori A."/>
            <person name="Sudo H."/>
            <person name="Hosoiri T."/>
            <person name="Kaku Y."/>
            <person name="Kodaira H."/>
            <person name="Kondo H."/>
            <person name="Sugawara M."/>
            <person name="Takahashi M."/>
            <person name="Kanda K."/>
            <person name="Yokoi T."/>
            <person name="Furuya T."/>
            <person name="Kikkawa E."/>
            <person name="Omura Y."/>
            <person name="Abe K."/>
            <person name="Kamihara K."/>
            <person name="Katsuta N."/>
            <person name="Sato K."/>
            <person name="Tanikawa M."/>
            <person name="Yamazaki M."/>
            <person name="Ninomiya K."/>
            <person name="Ishibashi T."/>
            <person name="Yamashita H."/>
            <person name="Murakawa K."/>
            <person name="Fujimori K."/>
            <person name="Tanai H."/>
            <person name="Kimata M."/>
            <person name="Watanabe M."/>
            <person name="Hiraoka S."/>
            <person name="Chiba Y."/>
            <person name="Ishida S."/>
            <person name="Ono Y."/>
            <person name="Takiguchi S."/>
            <person name="Watanabe S."/>
            <person name="Yosida M."/>
            <person name="Hotuta T."/>
            <person name="Kusano J."/>
            <person name="Kanehori K."/>
            <person name="Takahashi-Fujii A."/>
            <person name="Hara H."/>
            <person name="Tanase T.-O."/>
            <person name="Nomura Y."/>
            <person name="Togiya S."/>
            <person name="Komai F."/>
            <person name="Hara R."/>
            <person name="Takeuchi K."/>
            <person name="Arita M."/>
            <person name="Imose N."/>
            <person name="Musashino K."/>
            <person name="Yuuki H."/>
            <person name="Oshima A."/>
            <person name="Sasaki N."/>
            <person name="Aotsuka S."/>
            <person name="Yoshikawa Y."/>
            <person name="Matsunawa H."/>
            <person name="Ichihara T."/>
            <person name="Shiohata N."/>
            <person name="Sano S."/>
            <person name="Moriya S."/>
            <person name="Momiyama H."/>
            <person name="Satoh N."/>
            <person name="Takami S."/>
            <person name="Terashima Y."/>
            <person name="Suzuki O."/>
            <person name="Nakagawa S."/>
            <person name="Senoh A."/>
            <person name="Mizoguchi H."/>
            <person name="Goto Y."/>
            <person name="Shimizu F."/>
            <person name="Wakebe H."/>
            <person name="Hishigaki H."/>
            <person name="Watanabe T."/>
            <person name="Sugiyama A."/>
            <person name="Takemoto M."/>
            <person name="Kawakami B."/>
            <person name="Yamazaki M."/>
            <person name="Watanabe K."/>
            <person name="Kumagai A."/>
            <person name="Itakura S."/>
            <person name="Fukuzumi Y."/>
            <person name="Fujimori Y."/>
            <person name="Komiyama M."/>
            <person name="Tashiro H."/>
            <person name="Tanigami A."/>
            <person name="Fujiwara T."/>
            <person name="Ono T."/>
            <person name="Yamada K."/>
            <person name="Fujii Y."/>
            <person name="Ozaki K."/>
            <person name="Hirao M."/>
            <person name="Ohmori Y."/>
            <person name="Kawabata A."/>
            <person name="Hikiji T."/>
            <person name="Kobatake N."/>
            <person name="Inagaki H."/>
            <person name="Ikema Y."/>
            <person name="Okamoto S."/>
            <person name="Okitani R."/>
            <person name="Kawakami T."/>
            <person name="Noguchi S."/>
            <person name="Itoh T."/>
            <person name="Shigeta K."/>
            <person name="Senba T."/>
            <person name="Matsumura K."/>
            <person name="Nakajima Y."/>
            <person name="Mizuno T."/>
            <person name="Morinaga M."/>
            <person name="Sasaki M."/>
            <person name="Togashi T."/>
            <person name="Oyama M."/>
            <person name="Hata H."/>
            <person name="Watanabe M."/>
            <person name="Komatsu T."/>
            <person name="Mizushima-Sugano J."/>
            <person name="Satoh T."/>
            <person name="Shirai Y."/>
            <person name="Takahashi Y."/>
            <person name="Nakagawa K."/>
            <person name="Okumura K."/>
            <person name="Nagase T."/>
            <person name="Nomura N."/>
            <person name="Kikuchi H."/>
            <person name="Masuho Y."/>
            <person name="Yamashita R."/>
            <person name="Nakai K."/>
            <person name="Yada T."/>
            <person name="Nakamura Y."/>
            <person name="Ohara O."/>
            <person name="Isogai T."/>
            <person name="Sugano S."/>
        </authorList>
    </citation>
    <scope>NUCLEOTIDE SEQUENCE [LARGE SCALE MRNA] (ISOFORM 1)</scope>
</reference>
<reference key="5">
    <citation type="submission" date="2005-09" db="EMBL/GenBank/DDBJ databases">
        <authorList>
            <person name="Mural R.J."/>
            <person name="Istrail S."/>
            <person name="Sutton G.G."/>
            <person name="Florea L."/>
            <person name="Halpern A.L."/>
            <person name="Mobarry C.M."/>
            <person name="Lippert R."/>
            <person name="Walenz B."/>
            <person name="Shatkay H."/>
            <person name="Dew I."/>
            <person name="Miller J.R."/>
            <person name="Flanigan M.J."/>
            <person name="Edwards N.J."/>
            <person name="Bolanos R."/>
            <person name="Fasulo D."/>
            <person name="Halldorsson B.V."/>
            <person name="Hannenhalli S."/>
            <person name="Turner R."/>
            <person name="Yooseph S."/>
            <person name="Lu F."/>
            <person name="Nusskern D.R."/>
            <person name="Shue B.C."/>
            <person name="Zheng X.H."/>
            <person name="Zhong F."/>
            <person name="Delcher A.L."/>
            <person name="Huson D.H."/>
            <person name="Kravitz S.A."/>
            <person name="Mouchard L."/>
            <person name="Reinert K."/>
            <person name="Remington K.A."/>
            <person name="Clark A.G."/>
            <person name="Waterman M.S."/>
            <person name="Eichler E.E."/>
            <person name="Adams M.D."/>
            <person name="Hunkapiller M.W."/>
            <person name="Myers E.W."/>
            <person name="Venter J.C."/>
        </authorList>
    </citation>
    <scope>NUCLEOTIDE SEQUENCE [LARGE SCALE GENOMIC DNA]</scope>
</reference>
<reference key="6">
    <citation type="journal article" date="2004" name="Genome Res.">
        <title>The status, quality, and expansion of the NIH full-length cDNA project: the Mammalian Gene Collection (MGC).</title>
        <authorList>
            <consortium name="The MGC Project Team"/>
        </authorList>
    </citation>
    <scope>NUCLEOTIDE SEQUENCE [LARGE SCALE MRNA] (ISOFORM 1)</scope>
    <source>
        <tissue>Brain</tissue>
    </source>
</reference>
<reference key="7">
    <citation type="journal article" date="2007" name="J. Interferon Cytokine Res.">
        <title>Unique features of different members of the human guanylate-binding protein family.</title>
        <authorList>
            <person name="Tripal P."/>
            <person name="Bauer M."/>
            <person name="Naschberger E."/>
            <person name="Mortinger T."/>
            <person name="Hohenadl C."/>
            <person name="Cornali E."/>
            <person name="Thurau M."/>
            <person name="Sturzl M."/>
        </authorList>
    </citation>
    <scope>SUBCELLULAR LOCATION</scope>
    <scope>INDUCTION BY IFNG</scope>
</reference>
<reference key="8">
    <citation type="journal article" date="2010" name="FEBS J.">
        <title>Biochemical properties of the human guanylate binding protein 5 and a tumor-specific truncated splice variant.</title>
        <authorList>
            <person name="Wehner M."/>
            <person name="Herrmann C."/>
        </authorList>
    </citation>
    <scope>FUNCTION</scope>
    <scope>CATALYTIC ACTIVITY</scope>
    <scope>DIMERIZATION</scope>
</reference>
<reference key="9">
    <citation type="journal article" date="2010" name="PLoS ONE">
        <title>Intracellular trafficking of guanylate-binding proteins is regulated by heterodimerization in a hierarchical manner.</title>
        <authorList>
            <person name="Britzen-Laurent N."/>
            <person name="Bauer M."/>
            <person name="Berton V."/>
            <person name="Fischer N."/>
            <person name="Syguda A."/>
            <person name="Reipschlager S."/>
            <person name="Naschberger E."/>
            <person name="Herrmann C."/>
            <person name="Sturzl M."/>
        </authorList>
    </citation>
    <scope>SUBCELLULAR LOCATION</scope>
    <scope>ISOPRENYLATION AT CYS-583</scope>
    <scope>METHYLATION AT CYS-583</scope>
    <scope>MUTAGENESIS OF 583-CYS--LEU-586</scope>
    <scope>DIMERIZATION</scope>
</reference>
<reference key="10">
    <citation type="journal article" date="2012" name="Science">
        <title>GBP5 promotes NLRP3 inflammasome assembly and immunity in mammals.</title>
        <authorList>
            <person name="Shenoy A.R."/>
            <person name="Wellington D.A."/>
            <person name="Kumar P."/>
            <person name="Kassa H."/>
            <person name="Booth C.J."/>
            <person name="Cresswell P."/>
            <person name="MacMicking J.D."/>
        </authorList>
    </citation>
    <scope>FUNCTION</scope>
    <scope>CATALYTIC ACTIVITY</scope>
    <scope>INTERACTION WITH NLRP3</scope>
    <scope>OLIGOMERIZATION</scope>
    <scope>MUTAGENESIS OF 51-LYS-SER-52</scope>
    <scope>INDUCTION BY IFNG</scope>
</reference>
<reference key="11">
    <citation type="journal article" date="2016" name="Cell Host Microbe">
        <title>Guanylate binding protein (GBP) 5 is an interferon-inducible inhibitor of HIV-1 infectivity.</title>
        <authorList>
            <person name="Krapp C."/>
            <person name="Hotter D."/>
            <person name="Gawanbacht A."/>
            <person name="McLaren P.J."/>
            <person name="Kluge S.F."/>
            <person name="Stuerzel C.M."/>
            <person name="Mack K."/>
            <person name="Reith E."/>
            <person name="Engelhart S."/>
            <person name="Ciuffi A."/>
            <person name="Hornung V."/>
            <person name="Sauter D."/>
            <person name="Telenti A."/>
            <person name="Kirchhoff F."/>
        </authorList>
    </citation>
    <scope>FUNCTION</scope>
    <scope>CATALYTIC ACTIVITY</scope>
    <scope>SUBCELLULAR LOCATION</scope>
    <scope>ISOPRENYLATION AT CYS-583</scope>
    <scope>MUTAGENESIS OF 51-LYS-SER-52; THR-75; ASP-182 AND CYS-583</scope>
</reference>
<reference key="12">
    <citation type="journal article" date="2019" name="Cell Rep.">
        <title>Guanylate-binding proteins 2 and 5 exert broad antiviral activity by inhibiting furin-mediated processing of viral envelope proteins.</title>
        <authorList>
            <person name="Braun E."/>
            <person name="Hotter D."/>
            <person name="Koepke L."/>
            <person name="Zech F."/>
            <person name="Gross R."/>
            <person name="Sparrer K.M.J."/>
            <person name="Mueller J.A."/>
            <person name="Pfaller C.K."/>
            <person name="Heusinger E."/>
            <person name="Wombacher R."/>
            <person name="Sutter K."/>
            <person name="Dittmer U."/>
            <person name="Winkler M."/>
            <person name="Simmons G."/>
            <person name="Jakobsen M.R."/>
            <person name="Conzelmann K.K."/>
            <person name="Poehlmann S."/>
            <person name="Muench J."/>
            <person name="Fackler O.T."/>
            <person name="Kirchhoff F."/>
            <person name="Sauter D."/>
        </authorList>
    </citation>
    <scope>FUNCTION</scope>
    <scope>SUBCELLULAR LOCATION</scope>
    <scope>ISOPRENYLATION AT CYS-583</scope>
    <scope>MUTAGENESIS OF CYS-583</scope>
</reference>
<reference key="13">
    <citation type="journal article" date="2019" name="PLoS Pathog.">
        <title>Structural mechanism for guanylate-binding proteins (GBPs) targeting by the Shigella E3 ligase IpaH9.8.</title>
        <authorList>
            <person name="Ji C."/>
            <person name="Du S."/>
            <person name="Li P."/>
            <person name="Zhu Q."/>
            <person name="Yang X."/>
            <person name="Long C."/>
            <person name="Yu J."/>
            <person name="Shao F."/>
            <person name="Xiao J."/>
        </authorList>
    </citation>
    <scope>MUTAGENESIS OF 137-GLY--LEU-141</scope>
</reference>
<reference evidence="21 22 23" key="14">
    <citation type="journal article" date="2021" name="Proc. Natl. Acad. Sci. U.S.A.">
        <title>Structural basis for GTP-induced dimerization and antiviral function of guanylate-binding proteins.</title>
        <authorList>
            <person name="Cui W."/>
            <person name="Braun E."/>
            <person name="Wang W."/>
            <person name="Tang J."/>
            <person name="Zheng Y."/>
            <person name="Slater B."/>
            <person name="Li N."/>
            <person name="Chen C."/>
            <person name="Liu Q."/>
            <person name="Wang B."/>
            <person name="Li X."/>
            <person name="Duan Y."/>
            <person name="Xiao Y."/>
            <person name="Ti R."/>
            <person name="Hotter D."/>
            <person name="Ji X."/>
            <person name="Zhang L."/>
            <person name="Cui J."/>
            <person name="Xiong Y."/>
            <person name="Sauter D."/>
            <person name="Wang Z."/>
            <person name="Kirchhoff F."/>
            <person name="Yang H."/>
        </authorList>
    </citation>
    <scope>X-RAY CRYSTALLOGRAPHY (2.28 ANGSTROMS) OF 1-315 IN COMPLEX WITH GDP</scope>
    <scope>CATALYTIC ACTIVITY</scope>
    <scope>MUTAGENESIS OF SER-73; ARG-356; 417-GLU--LYS-421 AND 464-LYS--THR-476</scope>
</reference>
<evidence type="ECO:0000250" key="1">
    <source>
        <dbReference type="UniProtKB" id="P32455"/>
    </source>
</evidence>
<evidence type="ECO:0000250" key="2">
    <source>
        <dbReference type="UniProtKB" id="Q8CFB4"/>
    </source>
</evidence>
<evidence type="ECO:0000255" key="3"/>
<evidence type="ECO:0000255" key="4">
    <source>
        <dbReference type="PROSITE-ProRule" id="PRU01052"/>
    </source>
</evidence>
<evidence type="ECO:0000269" key="5">
    <source>
    </source>
</evidence>
<evidence type="ECO:0000269" key="6">
    <source>
    </source>
</evidence>
<evidence type="ECO:0000269" key="7">
    <source>
    </source>
</evidence>
<evidence type="ECO:0000269" key="8">
    <source>
    </source>
</evidence>
<evidence type="ECO:0000269" key="9">
    <source>
    </source>
</evidence>
<evidence type="ECO:0000269" key="10">
    <source>
    </source>
</evidence>
<evidence type="ECO:0000269" key="11">
    <source>
    </source>
</evidence>
<evidence type="ECO:0000269" key="12">
    <source>
    </source>
</evidence>
<evidence type="ECO:0000269" key="13">
    <source>
    </source>
</evidence>
<evidence type="ECO:0000303" key="14">
    <source>
    </source>
</evidence>
<evidence type="ECO:0000303" key="15">
    <source>
    </source>
</evidence>
<evidence type="ECO:0000305" key="16">
    <source>
    </source>
</evidence>
<evidence type="ECO:0000305" key="17">
    <source>
    </source>
</evidence>
<evidence type="ECO:0000305" key="18">
    <source>
    </source>
</evidence>
<evidence type="ECO:0000305" key="19">
    <source>
    </source>
</evidence>
<evidence type="ECO:0000312" key="20">
    <source>
        <dbReference type="HGNC" id="HGNC:19895"/>
    </source>
</evidence>
<evidence type="ECO:0007744" key="21">
    <source>
        <dbReference type="PDB" id="7CKF"/>
    </source>
</evidence>
<evidence type="ECO:0007744" key="22">
    <source>
        <dbReference type="PDB" id="7E59"/>
    </source>
</evidence>
<evidence type="ECO:0007744" key="23">
    <source>
        <dbReference type="PDB" id="7E5A"/>
    </source>
</evidence>
<evidence type="ECO:0007829" key="24">
    <source>
        <dbReference type="PDB" id="7CKF"/>
    </source>
</evidence>
<evidence type="ECO:0007829" key="25">
    <source>
        <dbReference type="PDB" id="7E59"/>
    </source>
</evidence>
<evidence type="ECO:0007829" key="26">
    <source>
        <dbReference type="PDB" id="7E5A"/>
    </source>
</evidence>
<sequence>MALEIHMSDPMCLIENFNEQLKVNQEALEILSAITQPVVVVAIVGLYRTGKSYLMNKLAGKNKGFSVASTVQSHTKGIWIWCVPHPNWPNHTLVLLDTEGLGDVEKADNKNDIQIFALALLLSSTFVYNTVNKIDQGAIDLLHNVTELTDLLKARNSPDLDRVEDPADSASFFPDLVWTLRDFCLGLEIDGQLVTPDEYLENSLRPKQGSDQRVQNFNLPRLCIQKFFPKKKCFIFDLPAHQKKLAQLETLPDDELEPEFVQQVTEFCSYIFSHSMTKTLPGGIMVNGSRLKNLVLTYVNAISSGDLPCIENAVLALAQRENSAAVQKAIAHYDQQMGQKVQLPMETLQELLDLHRTSEREAIEVFMKNSFKDVDQSFQKELETLLDAKQNDICKRNLEASSDYCSALLKDIFGPLEEAVKQGIYSKPGGHNLFIQKTEELKAKYYREPRKGIQAEEVLQKYLKSKESVSHAILQTDQALTETEKKKKEAQVKAEAEKAEAQRLAAIQRQNEQMMQERERLHQEQVRQMEIAKQNWLAEQQKMQEQQMQEQAAQLSTTFQAQNRSLLSELQHAQRTVNNDDPCVLL</sequence>
<name>GBP5_HUMAN</name>
<comment type="function">
    <text evidence="2 7 9 10 11">Interferon (IFN)-inducible GTPase that plays important roles in innate immunity against a diverse range of bacterial, viral and protozoan pathogens (By similarity). Hydrolyzes GTP, but in contrast to other family members, does not produce GMP (PubMed:20180847). Following infection, recruited to the pathogen-containing vacuoles or vacuole-escaped bacteria and acts as a positive regulator of inflammasome assembly by promoting the release of inflammasome ligands from bacteria (By similarity). Acts by promoting lysis of pathogen-containing vacuoles, releasing pathogens into the cytosol (By similarity). Following pathogen release in the cytosol, promotes recruitment of proteins that mediate bacterial cytolysis: this liberates ligands that are detected by inflammasomes, such as lipopolysaccharide (LPS) that activates the non-canonical CASP4/CASP11 inflammasome or double-stranded DNA (dsDNA) that activates the AIM2 inflammasome (By similarity). As an activator of NLRP3 inflammasome assembly: promotes selective NLRP3 inflammasome assembly in response to microbial and soluble, but not crystalline, agents (PubMed:22461501). Independently of its GTPase activity, acts as an inhibitor of various viruses infectivity, such as HIV-1, Zika and influenza A viruses, by inhibiting FURIN-mediated maturation of viral envelope proteins (PubMed:26996307, PubMed:31091448).</text>
</comment>
<comment type="function">
    <text evidence="5">Antigenic tumor-specific truncated splice form.</text>
</comment>
<comment type="catalytic activity">
    <reaction evidence="7 9 10 13">
        <text>GTP + H2O = GDP + phosphate + H(+)</text>
        <dbReference type="Rhea" id="RHEA:19669"/>
        <dbReference type="ChEBI" id="CHEBI:15377"/>
        <dbReference type="ChEBI" id="CHEBI:15378"/>
        <dbReference type="ChEBI" id="CHEBI:37565"/>
        <dbReference type="ChEBI" id="CHEBI:43474"/>
        <dbReference type="ChEBI" id="CHEBI:58189"/>
    </reaction>
    <physiologicalReaction direction="left-to-right" evidence="7 9 13">
        <dbReference type="Rhea" id="RHEA:19670"/>
    </physiologicalReaction>
</comment>
<comment type="subunit">
    <text evidence="7 8 9 13">Homodimer; homodimerizes upon GTP-binding, forming a close face-to-face dimer (PubMed:20180847, PubMed:21151871, PubMed:33876762). Heterodimer with other family members, including GBP1, GBP2, GBP3 and GBP4 (PubMed:21151871). May also form tetramers (dimer of dimers) in the presence of GTP (PubMed:20180847). Interacts with NLRP3, possibly in its tetrameric form, and promotes PYCARD/ASC polymerization (PubMed:22461501).</text>
</comment>
<comment type="subunit">
    <molecule>Isoform 1</molecule>
    <text evidence="7">Homodimer; homodimerizes upon GTP-binding (PubMed:20180847). GDP-bound form remains homodimeric (PubMed:20180847).</text>
</comment>
<comment type="subunit">
    <molecule>Isoform 2</molecule>
    <text evidence="7">Homodimer; homodimerizes upon GTP-binding (PubMed:20180847). GDP-bound is monomeric (PubMed:20180847).</text>
</comment>
<comment type="interaction">
    <interactant intactId="EBI-749932">
        <id>Q96PP8</id>
    </interactant>
    <interactant intactId="EBI-2869161">
        <id>P32455</id>
        <label>GBP1</label>
    </interactant>
    <organismsDiffer>false</organismsDiffer>
    <experiments>11</experiments>
</comment>
<comment type="interaction">
    <interactant intactId="EBI-749932">
        <id>Q96PP8</id>
    </interactant>
    <interactant intactId="EBI-714388">
        <id>P32456</id>
        <label>GBP2</label>
    </interactant>
    <organismsDiffer>false</organismsDiffer>
    <experiments>7</experiments>
</comment>
<comment type="interaction">
    <interactant intactId="EBI-749932">
        <id>Q96PP8</id>
    </interactant>
    <interactant intactId="EBI-2798916">
        <id>Q9H0R5</id>
        <label>GBP3</label>
    </interactant>
    <organismsDiffer>false</organismsDiffer>
    <experiments>2</experiments>
</comment>
<comment type="interaction">
    <interactant intactId="EBI-749932">
        <id>Q96PP8</id>
    </interactant>
    <interactant intactId="EBI-20840650">
        <id>Q96PP9</id>
        <label>GBP4</label>
    </interactant>
    <organismsDiffer>false</organismsDiffer>
    <experiments>2</experiments>
</comment>
<comment type="interaction">
    <interactant intactId="EBI-749932">
        <id>Q96PP8</id>
    </interactant>
    <interactant intactId="EBI-749932">
        <id>Q96PP8</id>
        <label>GBP5</label>
    </interactant>
    <organismsDiffer>false</organismsDiffer>
    <experiments>10</experiments>
</comment>
<comment type="subcellular location">
    <subcellularLocation>
        <location evidence="2">Cytoplasmic vesicle membrane</location>
        <topology evidence="8">Lipid-anchor</topology>
        <topology evidence="8">GPI-like-anchor</topology>
    </subcellularLocation>
    <subcellularLocation>
        <location evidence="6 8 10 11">Golgi apparatus membrane</location>
        <topology evidence="8">Lipid-anchor</topology>
    </subcellularLocation>
    <subcellularLocation>
        <location evidence="6 8">Cytoplasm</location>
    </subcellularLocation>
</comment>
<comment type="alternative products">
    <event type="alternative splicing"/>
    <isoform>
        <id>Q96PP8-1</id>
        <name>1</name>
        <name>GBP-5a/b</name>
        <sequence type="displayed"/>
    </isoform>
    <isoform>
        <id>Q96PP8-2</id>
        <name>2</name>
        <name>GBP-5ta</name>
        <sequence type="described" ref="VSP_044362 VSP_044363"/>
    </isoform>
</comment>
<comment type="tissue specificity">
    <text evidence="5">Expressed in peripheral blood monocytes (at protein level).</text>
</comment>
<comment type="induction">
    <text evidence="6 9">By IFNG in endothelial cells and in LPS-primed macrophages.</text>
</comment>
<comment type="PTM">
    <text evidence="8">Isoprenylation is required for proper subcellular location.</text>
</comment>
<comment type="similarity">
    <text evidence="4">Belongs to the TRAFAC class dynamin-like GTPase superfamily. GB1/RHD3 GTPase family. GB1 subfamily.</text>
</comment>
<feature type="chain" id="PRO_0000190969" description="Guanylate-binding protein 5">
    <location>
        <begin position="1"/>
        <end position="583"/>
    </location>
</feature>
<feature type="propeptide" id="PRO_0000370785" description="Removed in mature form" evidence="3">
    <location>
        <begin position="584"/>
        <end position="586"/>
    </location>
</feature>
<feature type="domain" description="GB1/RHD3-type G" evidence="4">
    <location>
        <begin position="35"/>
        <end position="276"/>
    </location>
</feature>
<feature type="region of interest" description="GTPase domain (Globular)" evidence="1">
    <location>
        <begin position="1"/>
        <end position="309"/>
    </location>
</feature>
<feature type="region of interest" description="NLRP3-binding" evidence="9">
    <location>
        <begin position="1"/>
        <end position="306"/>
    </location>
</feature>
<feature type="region of interest" description="Required for tetramerization, but not for dimerization" evidence="9">
    <location>
        <begin position="529"/>
        <end position="586"/>
    </location>
</feature>
<feature type="binding site" evidence="19 21 23">
    <location>
        <begin position="45"/>
        <end position="52"/>
    </location>
    <ligand>
        <name>GTP</name>
        <dbReference type="ChEBI" id="CHEBI:37565"/>
    </ligand>
</feature>
<feature type="binding site" evidence="19 21 23">
    <location>
        <begin position="67"/>
        <end position="69"/>
    </location>
    <ligand>
        <name>GTP</name>
        <dbReference type="ChEBI" id="CHEBI:37565"/>
    </ligand>
</feature>
<feature type="binding site" evidence="19 21 23">
    <location>
        <begin position="181"/>
        <end position="182"/>
    </location>
    <ligand>
        <name>GTP</name>
        <dbReference type="ChEBI" id="CHEBI:37565"/>
    </ligand>
</feature>
<feature type="binding site" evidence="19 21 23">
    <location>
        <position position="245"/>
    </location>
    <ligand>
        <name>GTP</name>
        <dbReference type="ChEBI" id="CHEBI:37565"/>
    </ligand>
</feature>
<feature type="modified residue" description="Cysteine methyl ester" evidence="16">
    <location>
        <position position="583"/>
    </location>
</feature>
<feature type="lipid moiety-binding region" description="S-geranylgeranyl cysteine" evidence="8 17 18">
    <location>
        <position position="583"/>
    </location>
</feature>
<feature type="splice variant" id="VSP_044362" description="In isoform 2." evidence="14">
    <original>E</original>
    <variation>K</variation>
    <location>
        <position position="489"/>
    </location>
</feature>
<feature type="splice variant" id="VSP_044363" description="In isoform 2." evidence="14">
    <location>
        <begin position="490"/>
        <end position="586"/>
    </location>
</feature>
<feature type="sequence variant" id="VAR_053104" description="In dbSNP:rs17130763.">
    <original>E</original>
    <variation>Q</variation>
    <location>
        <position position="4"/>
    </location>
</feature>
<feature type="sequence variant" id="VAR_033956" description="In dbSNP:rs3806339.">
    <original>T</original>
    <variation>M</variation>
    <location>
        <position position="35"/>
    </location>
</feature>
<feature type="mutagenesis site" description="Loss of GTPase activity. No effect on tetramerization. Does not affect ability to inhibit HIV-1 infectivity." evidence="9 10">
    <original>KS</original>
    <variation>AA</variation>
    <location>
        <begin position="51"/>
        <end position="52"/>
    </location>
</feature>
<feature type="mutagenesis site" description="Does not affect GTPase activity." evidence="13">
    <original>S</original>
    <variation>A</variation>
    <location>
        <position position="73"/>
    </location>
</feature>
<feature type="mutagenesis site" description="Abolished GTPase activity, without affecting ability to inhibit HIV-1 infectivity." evidence="10">
    <original>T</original>
    <variation>S</variation>
    <location>
        <position position="75"/>
    </location>
</feature>
<feature type="mutagenesis site" description="Promotes ubiquitination and degradation by S.flexneri IpaH9.8." evidence="12">
    <original>GAIDL</original>
    <variation>QAIDQ</variation>
    <location>
        <begin position="137"/>
        <end position="141"/>
    </location>
</feature>
<feature type="mutagenesis site" description="Decreased nucleotide-binding, without affecting ability to inhibit HIV-1 infectivity." evidence="10">
    <original>D</original>
    <variation>N</variation>
    <location>
        <position position="182"/>
    </location>
</feature>
<feature type="mutagenesis site" description="No effect." evidence="13">
    <original>R</original>
    <variation>A</variation>
    <location>
        <position position="356"/>
    </location>
</feature>
<feature type="mutagenesis site" description="In MMMD mutant; abolished dimerization and ability to restrict HIV-1; when associated with 464-A--A-476." evidence="13">
    <original>EEAVK</original>
    <variation>AEAVA</variation>
    <location>
        <begin position="417"/>
        <end position="421"/>
    </location>
</feature>
<feature type="mutagenesis site" description="In MMMD mutant; abolished dimerization and ability to restrict HIV-1; when associated with 417-A--A-421." evidence="13">
    <original>KSKESVSHAILQT</original>
    <variation>AAAEAASAAILAA</variation>
    <location>
        <begin position="464"/>
        <end position="476"/>
    </location>
</feature>
<feature type="mutagenesis site" description="Loss of isoprenylation and of localization at the Golgi apparatus." evidence="8">
    <location>
        <begin position="583"/>
        <end position="586"/>
    </location>
</feature>
<feature type="mutagenesis site" description="Loss of isoprenylation and of localization at the Golgi apparatus. Impaired ability to restrict HIV-1." evidence="10 11">
    <original>C</original>
    <variation>A</variation>
    <location>
        <position position="583"/>
    </location>
</feature>
<feature type="strand" evidence="25">
    <location>
        <begin position="3"/>
        <end position="9"/>
    </location>
</feature>
<feature type="strand" evidence="24">
    <location>
        <begin position="11"/>
        <end position="15"/>
    </location>
</feature>
<feature type="helix" evidence="24">
    <location>
        <begin position="17"/>
        <end position="19"/>
    </location>
</feature>
<feature type="strand" evidence="26">
    <location>
        <begin position="20"/>
        <end position="23"/>
    </location>
</feature>
<feature type="helix" evidence="24">
    <location>
        <begin position="25"/>
        <end position="33"/>
    </location>
</feature>
<feature type="strand" evidence="24">
    <location>
        <begin position="36"/>
        <end position="50"/>
    </location>
</feature>
<feature type="helix" evidence="24">
    <location>
        <begin position="51"/>
        <end position="59"/>
    </location>
</feature>
<feature type="strand" evidence="24">
    <location>
        <begin position="62"/>
        <end position="65"/>
    </location>
</feature>
<feature type="strand" evidence="24">
    <location>
        <begin position="70"/>
        <end position="72"/>
    </location>
</feature>
<feature type="strand" evidence="24">
    <location>
        <begin position="77"/>
        <end position="84"/>
    </location>
</feature>
<feature type="strand" evidence="24">
    <location>
        <begin position="86"/>
        <end position="88"/>
    </location>
</feature>
<feature type="strand" evidence="24">
    <location>
        <begin position="92"/>
        <end position="98"/>
    </location>
</feature>
<feature type="turn" evidence="24">
    <location>
        <begin position="104"/>
        <end position="106"/>
    </location>
</feature>
<feature type="helix" evidence="24">
    <location>
        <begin position="109"/>
        <end position="122"/>
    </location>
</feature>
<feature type="strand" evidence="24">
    <location>
        <begin position="124"/>
        <end position="133"/>
    </location>
</feature>
<feature type="helix" evidence="24">
    <location>
        <begin position="136"/>
        <end position="152"/>
    </location>
</feature>
<feature type="helix" evidence="26">
    <location>
        <begin position="170"/>
        <end position="172"/>
    </location>
</feature>
<feature type="strand" evidence="24">
    <location>
        <begin position="175"/>
        <end position="182"/>
    </location>
</feature>
<feature type="helix" evidence="24">
    <location>
        <begin position="196"/>
        <end position="204"/>
    </location>
</feature>
<feature type="helix" evidence="26">
    <location>
        <begin position="212"/>
        <end position="227"/>
    </location>
</feature>
<feature type="strand" evidence="24">
    <location>
        <begin position="230"/>
        <end position="235"/>
    </location>
</feature>
<feature type="strand" evidence="24">
    <location>
        <begin position="241"/>
        <end position="243"/>
    </location>
</feature>
<feature type="helix" evidence="24">
    <location>
        <begin position="245"/>
        <end position="250"/>
    </location>
</feature>
<feature type="helix" evidence="24">
    <location>
        <begin position="253"/>
        <end position="255"/>
    </location>
</feature>
<feature type="helix" evidence="24">
    <location>
        <begin position="258"/>
        <end position="274"/>
    </location>
</feature>
<feature type="turn" evidence="24">
    <location>
        <begin position="281"/>
        <end position="283"/>
    </location>
</feature>
<feature type="helix" evidence="24">
    <location>
        <begin position="288"/>
        <end position="302"/>
    </location>
</feature>
<feature type="turn" evidence="25">
    <location>
        <begin position="303"/>
        <end position="305"/>
    </location>
</feature>
<feature type="helix" evidence="26">
    <location>
        <begin position="313"/>
        <end position="335"/>
    </location>
</feature>
<feature type="helix" evidence="26">
    <location>
        <begin position="349"/>
        <end position="369"/>
    </location>
</feature>
<feature type="helix" evidence="26">
    <location>
        <begin position="374"/>
        <end position="376"/>
    </location>
</feature>
<feature type="helix" evidence="26">
    <location>
        <begin position="377"/>
        <end position="412"/>
    </location>
</feature>
<feature type="helix" evidence="26">
    <location>
        <begin position="414"/>
        <end position="422"/>
    </location>
</feature>
<feature type="turn" evidence="26">
    <location>
        <begin position="423"/>
        <end position="425"/>
    </location>
</feature>
<feature type="helix" evidence="26">
    <location>
        <begin position="433"/>
        <end position="447"/>
    </location>
</feature>
<feature type="helix" evidence="26">
    <location>
        <begin position="455"/>
        <end position="465"/>
    </location>
</feature>
<feature type="turn" evidence="26">
    <location>
        <begin position="466"/>
        <end position="468"/>
    </location>
</feature>
<feature type="helix" evidence="26">
    <location>
        <begin position="469"/>
        <end position="482"/>
    </location>
</feature>
<protein>
    <recommendedName>
        <fullName>Guanylate-binding protein 5</fullName>
        <ecNumber evidence="7 9">3.6.5.-</ecNumber>
    </recommendedName>
    <alternativeName>
        <fullName evidence="14">GBP-TA antigen</fullName>
    </alternativeName>
    <alternativeName>
        <fullName evidence="15">GTP-binding protein 5</fullName>
        <shortName evidence="15">GBP-5</shortName>
    </alternativeName>
    <alternativeName>
        <fullName evidence="15">Guanine nucleotide-binding protein 5</fullName>
    </alternativeName>
</protein>
<proteinExistence type="evidence at protein level"/>
<accession>Q96PP8</accession>
<accession>B2RCE1</accession>
<accession>Q86TM5</accession>
<organism>
    <name type="scientific">Homo sapiens</name>
    <name type="common">Human</name>
    <dbReference type="NCBI Taxonomy" id="9606"/>
    <lineage>
        <taxon>Eukaryota</taxon>
        <taxon>Metazoa</taxon>
        <taxon>Chordata</taxon>
        <taxon>Craniata</taxon>
        <taxon>Vertebrata</taxon>
        <taxon>Euteleostomi</taxon>
        <taxon>Mammalia</taxon>
        <taxon>Eutheria</taxon>
        <taxon>Euarchontoglires</taxon>
        <taxon>Primates</taxon>
        <taxon>Haplorrhini</taxon>
        <taxon>Catarrhini</taxon>
        <taxon>Hominidae</taxon>
        <taxon>Homo</taxon>
    </lineage>
</organism>
<gene>
    <name evidence="15 20" type="primary">GBP5</name>
    <name type="ORF">UNQ2427/PRO4987</name>
</gene>
<dbReference type="EC" id="3.6.5.-" evidence="7 9"/>
<dbReference type="EMBL" id="AF288815">
    <property type="protein sequence ID" value="AAL02055.1"/>
    <property type="molecule type" value="mRNA"/>
</dbReference>
<dbReference type="EMBL" id="AF328727">
    <property type="protein sequence ID" value="AAO40731.1"/>
    <property type="molecule type" value="mRNA"/>
</dbReference>
<dbReference type="EMBL" id="AF430642">
    <property type="protein sequence ID" value="AAN39035.1"/>
    <property type="molecule type" value="mRNA"/>
</dbReference>
<dbReference type="EMBL" id="AF430643">
    <property type="protein sequence ID" value="AAN39036.1"/>
    <property type="molecule type" value="mRNA"/>
</dbReference>
<dbReference type="EMBL" id="AY358953">
    <property type="protein sequence ID" value="AAQ89312.1"/>
    <property type="molecule type" value="mRNA"/>
</dbReference>
<dbReference type="EMBL" id="AK315064">
    <property type="protein sequence ID" value="BAG37538.1"/>
    <property type="molecule type" value="mRNA"/>
</dbReference>
<dbReference type="EMBL" id="CH471097">
    <property type="protein sequence ID" value="EAW73141.1"/>
    <property type="molecule type" value="Genomic_DNA"/>
</dbReference>
<dbReference type="EMBL" id="BC031639">
    <property type="protein sequence ID" value="AAH31639.1"/>
    <property type="molecule type" value="mRNA"/>
</dbReference>
<dbReference type="CCDS" id="CCDS722.1">
    <molecule id="Q96PP8-1"/>
</dbReference>
<dbReference type="RefSeq" id="NP_001127958.1">
    <molecule id="Q96PP8-1"/>
    <property type="nucleotide sequence ID" value="NM_001134486.4"/>
</dbReference>
<dbReference type="RefSeq" id="NP_443174.1">
    <molecule id="Q96PP8-1"/>
    <property type="nucleotide sequence ID" value="NM_052942.5"/>
</dbReference>
<dbReference type="PDB" id="7CKF">
    <property type="method" value="X-ray"/>
    <property type="resolution" value="2.28 A"/>
    <property type="chains" value="A/B=1-315"/>
</dbReference>
<dbReference type="PDB" id="7E59">
    <property type="method" value="X-ray"/>
    <property type="resolution" value="3.00 A"/>
    <property type="chains" value="A/B/C/G=1-486"/>
</dbReference>
<dbReference type="PDB" id="7E5A">
    <property type="method" value="X-ray"/>
    <property type="resolution" value="2.50 A"/>
    <property type="chains" value="A/B=1-486"/>
</dbReference>
<dbReference type="PDBsum" id="7CKF"/>
<dbReference type="PDBsum" id="7E59"/>
<dbReference type="PDBsum" id="7E5A"/>
<dbReference type="SMR" id="Q96PP8"/>
<dbReference type="BioGRID" id="125431">
    <property type="interactions" value="17"/>
</dbReference>
<dbReference type="FunCoup" id="Q96PP8">
    <property type="interactions" value="476"/>
</dbReference>
<dbReference type="IntAct" id="Q96PP8">
    <property type="interactions" value="17"/>
</dbReference>
<dbReference type="MINT" id="Q96PP8"/>
<dbReference type="STRING" id="9606.ENSP00000359488"/>
<dbReference type="GlyGen" id="Q96PP8">
    <property type="glycosylation" value="2 sites, 1 N-linked glycan (1 site), 1 O-linked glycan (1 site)"/>
</dbReference>
<dbReference type="iPTMnet" id="Q96PP8"/>
<dbReference type="PhosphoSitePlus" id="Q96PP8"/>
<dbReference type="BioMuta" id="GBP5"/>
<dbReference type="DMDM" id="37999757"/>
<dbReference type="jPOST" id="Q96PP8"/>
<dbReference type="MassIVE" id="Q96PP8"/>
<dbReference type="PaxDb" id="9606-ENSP00000359488"/>
<dbReference type="PeptideAtlas" id="Q96PP8"/>
<dbReference type="ProteomicsDB" id="77725">
    <molecule id="Q96PP8-1"/>
</dbReference>
<dbReference type="Antibodypedia" id="33615">
    <property type="antibodies" value="327 antibodies from 32 providers"/>
</dbReference>
<dbReference type="DNASU" id="115362"/>
<dbReference type="Ensembl" id="ENST00000370459.8">
    <molecule id="Q96PP8-1"/>
    <property type="protein sequence ID" value="ENSP00000359488.3"/>
    <property type="gene ID" value="ENSG00000154451.15"/>
</dbReference>
<dbReference type="GeneID" id="115362"/>
<dbReference type="KEGG" id="hsa:115362"/>
<dbReference type="MANE-Select" id="ENST00000370459.8">
    <property type="protein sequence ID" value="ENSP00000359488.3"/>
    <property type="RefSeq nucleotide sequence ID" value="NM_052942.5"/>
    <property type="RefSeq protein sequence ID" value="NP_443174.1"/>
</dbReference>
<dbReference type="UCSC" id="uc057iek.1">
    <molecule id="Q96PP8-1"/>
    <property type="organism name" value="human"/>
</dbReference>
<dbReference type="AGR" id="HGNC:19895"/>
<dbReference type="CTD" id="115362"/>
<dbReference type="DisGeNET" id="115362"/>
<dbReference type="GeneCards" id="GBP5"/>
<dbReference type="HGNC" id="HGNC:19895">
    <property type="gene designation" value="GBP5"/>
</dbReference>
<dbReference type="HPA" id="ENSG00000154451">
    <property type="expression patterns" value="Tissue enhanced (bone marrow, lymphoid tissue)"/>
</dbReference>
<dbReference type="MIM" id="611467">
    <property type="type" value="gene"/>
</dbReference>
<dbReference type="neXtProt" id="NX_Q96PP8"/>
<dbReference type="OpenTargets" id="ENSG00000154451"/>
<dbReference type="PharmGKB" id="PA134862968"/>
<dbReference type="VEuPathDB" id="HostDB:ENSG00000154451"/>
<dbReference type="eggNOG" id="KOG2037">
    <property type="taxonomic scope" value="Eukaryota"/>
</dbReference>
<dbReference type="GeneTree" id="ENSGT00940000162684"/>
<dbReference type="InParanoid" id="Q96PP8"/>
<dbReference type="OMA" id="CETHHAS"/>
<dbReference type="OrthoDB" id="2135133at2759"/>
<dbReference type="PAN-GO" id="Q96PP8">
    <property type="GO annotations" value="4 GO annotations based on evolutionary models"/>
</dbReference>
<dbReference type="PhylomeDB" id="Q96PP8"/>
<dbReference type="TreeFam" id="TF331602"/>
<dbReference type="PathwayCommons" id="Q96PP8"/>
<dbReference type="Reactome" id="R-HSA-877300">
    <property type="pathway name" value="Interferon gamma signaling"/>
</dbReference>
<dbReference type="SignaLink" id="Q96PP8"/>
<dbReference type="BioGRID-ORCS" id="115362">
    <property type="hits" value="16 hits in 1151 CRISPR screens"/>
</dbReference>
<dbReference type="GenomeRNAi" id="115362"/>
<dbReference type="Pharos" id="Q96PP8">
    <property type="development level" value="Tbio"/>
</dbReference>
<dbReference type="PRO" id="PR:Q96PP8"/>
<dbReference type="Proteomes" id="UP000005640">
    <property type="component" value="Chromosome 1"/>
</dbReference>
<dbReference type="RNAct" id="Q96PP8">
    <property type="molecule type" value="protein"/>
</dbReference>
<dbReference type="Bgee" id="ENSG00000154451">
    <property type="expression patterns" value="Expressed in granulocyte and 122 other cell types or tissues"/>
</dbReference>
<dbReference type="ExpressionAtlas" id="Q96PP8">
    <property type="expression patterns" value="baseline and differential"/>
</dbReference>
<dbReference type="GO" id="GO:0005737">
    <property type="term" value="C:cytoplasm"/>
    <property type="evidence" value="ECO:0000314"/>
    <property type="project" value="UniProtKB"/>
</dbReference>
<dbReference type="GO" id="GO:0031410">
    <property type="term" value="C:cytoplasmic vesicle"/>
    <property type="evidence" value="ECO:0000318"/>
    <property type="project" value="GO_Central"/>
</dbReference>
<dbReference type="GO" id="GO:0030659">
    <property type="term" value="C:cytoplasmic vesicle membrane"/>
    <property type="evidence" value="ECO:0007669"/>
    <property type="project" value="UniProtKB-SubCell"/>
</dbReference>
<dbReference type="GO" id="GO:0005794">
    <property type="term" value="C:Golgi apparatus"/>
    <property type="evidence" value="ECO:0000314"/>
    <property type="project" value="UniProtKB"/>
</dbReference>
<dbReference type="GO" id="GO:0000139">
    <property type="term" value="C:Golgi membrane"/>
    <property type="evidence" value="ECO:0000314"/>
    <property type="project" value="UniProt"/>
</dbReference>
<dbReference type="GO" id="GO:0016020">
    <property type="term" value="C:membrane"/>
    <property type="evidence" value="ECO:0007005"/>
    <property type="project" value="UniProtKB"/>
</dbReference>
<dbReference type="GO" id="GO:0048471">
    <property type="term" value="C:perinuclear region of cytoplasm"/>
    <property type="evidence" value="ECO:0000314"/>
    <property type="project" value="UniProtKB"/>
</dbReference>
<dbReference type="GO" id="GO:0098552">
    <property type="term" value="C:side of membrane"/>
    <property type="evidence" value="ECO:0007669"/>
    <property type="project" value="UniProtKB-KW"/>
</dbReference>
<dbReference type="GO" id="GO:0106139">
    <property type="term" value="C:symbiont cell surface"/>
    <property type="evidence" value="ECO:0007669"/>
    <property type="project" value="Ensembl"/>
</dbReference>
<dbReference type="GO" id="GO:0004866">
    <property type="term" value="F:endopeptidase inhibitor activity"/>
    <property type="evidence" value="ECO:0000314"/>
    <property type="project" value="UniProt"/>
</dbReference>
<dbReference type="GO" id="GO:0005525">
    <property type="term" value="F:GTP binding"/>
    <property type="evidence" value="ECO:0000318"/>
    <property type="project" value="GO_Central"/>
</dbReference>
<dbReference type="GO" id="GO:0003924">
    <property type="term" value="F:GTPase activity"/>
    <property type="evidence" value="ECO:0000314"/>
    <property type="project" value="UniProtKB"/>
</dbReference>
<dbReference type="GO" id="GO:0042802">
    <property type="term" value="F:identical protein binding"/>
    <property type="evidence" value="ECO:0000353"/>
    <property type="project" value="IntAct"/>
</dbReference>
<dbReference type="GO" id="GO:0140678">
    <property type="term" value="F:molecular function inhibitor activity"/>
    <property type="evidence" value="ECO:0000314"/>
    <property type="project" value="UniProtKB"/>
</dbReference>
<dbReference type="GO" id="GO:0042803">
    <property type="term" value="F:protein homodimerization activity"/>
    <property type="evidence" value="ECO:0000314"/>
    <property type="project" value="UniProtKB"/>
</dbReference>
<dbReference type="GO" id="GO:0002218">
    <property type="term" value="P:activation of innate immune response"/>
    <property type="evidence" value="ECO:0007669"/>
    <property type="project" value="Ensembl"/>
</dbReference>
<dbReference type="GO" id="GO:0071222">
    <property type="term" value="P:cellular response to lipopolysaccharide"/>
    <property type="evidence" value="ECO:0007669"/>
    <property type="project" value="Ensembl"/>
</dbReference>
<dbReference type="GO" id="GO:0071346">
    <property type="term" value="P:cellular response to type II interferon"/>
    <property type="evidence" value="ECO:0000270"/>
    <property type="project" value="UniProtKB"/>
</dbReference>
<dbReference type="GO" id="GO:0051715">
    <property type="term" value="P:cytolysis in another organism"/>
    <property type="evidence" value="ECO:0000250"/>
    <property type="project" value="UniProtKB"/>
</dbReference>
<dbReference type="GO" id="GO:0042742">
    <property type="term" value="P:defense response to bacterium"/>
    <property type="evidence" value="ECO:0007669"/>
    <property type="project" value="Ensembl"/>
</dbReference>
<dbReference type="GO" id="GO:0051607">
    <property type="term" value="P:defense response to virus"/>
    <property type="evidence" value="ECO:0000314"/>
    <property type="project" value="UniProtKB"/>
</dbReference>
<dbReference type="GO" id="GO:0006954">
    <property type="term" value="P:inflammatory response"/>
    <property type="evidence" value="ECO:0007669"/>
    <property type="project" value="UniProtKB-KW"/>
</dbReference>
<dbReference type="GO" id="GO:0140973">
    <property type="term" value="P:positive regulation of AIM2 inflammasome complex assembly"/>
    <property type="evidence" value="ECO:0000250"/>
    <property type="project" value="UniProtKB"/>
</dbReference>
<dbReference type="GO" id="GO:1900017">
    <property type="term" value="P:positive regulation of cytokine production involved in inflammatory response"/>
    <property type="evidence" value="ECO:0000250"/>
    <property type="project" value="UniProtKB"/>
</dbReference>
<dbReference type="GO" id="GO:0045089">
    <property type="term" value="P:positive regulation of innate immune response"/>
    <property type="evidence" value="ECO:0000250"/>
    <property type="project" value="UniProtKB"/>
</dbReference>
<dbReference type="GO" id="GO:0032731">
    <property type="term" value="P:positive regulation of interleukin-1 beta production"/>
    <property type="evidence" value="ECO:0000315"/>
    <property type="project" value="UniProtKB"/>
</dbReference>
<dbReference type="GO" id="GO:0032741">
    <property type="term" value="P:positive regulation of interleukin-18 production"/>
    <property type="evidence" value="ECO:0000250"/>
    <property type="project" value="UniProtKB"/>
</dbReference>
<dbReference type="GO" id="GO:1900227">
    <property type="term" value="P:positive regulation of NLRP3 inflammasome complex assembly"/>
    <property type="evidence" value="ECO:0000314"/>
    <property type="project" value="UniProtKB"/>
</dbReference>
<dbReference type="GO" id="GO:0140639">
    <property type="term" value="P:positive regulation of pyroptotic inflammatory response"/>
    <property type="evidence" value="ECO:0000250"/>
    <property type="project" value="UniProtKB"/>
</dbReference>
<dbReference type="GO" id="GO:0051289">
    <property type="term" value="P:protein homotetramerization"/>
    <property type="evidence" value="ECO:0000314"/>
    <property type="project" value="UniProtKB"/>
</dbReference>
<dbReference type="GO" id="GO:0034067">
    <property type="term" value="P:protein localization to Golgi apparatus"/>
    <property type="evidence" value="ECO:0000314"/>
    <property type="project" value="UniProtKB"/>
</dbReference>
<dbReference type="GO" id="GO:0006605">
    <property type="term" value="P:protein targeting"/>
    <property type="evidence" value="ECO:0007669"/>
    <property type="project" value="Ensembl"/>
</dbReference>
<dbReference type="CDD" id="cd01851">
    <property type="entry name" value="GBP"/>
    <property type="match status" value="1"/>
</dbReference>
<dbReference type="CDD" id="cd16269">
    <property type="entry name" value="GBP_C"/>
    <property type="match status" value="1"/>
</dbReference>
<dbReference type="FunFam" id="1.20.1000.10:FF:000001">
    <property type="entry name" value="Guanylate binding protein 1"/>
    <property type="match status" value="1"/>
</dbReference>
<dbReference type="FunFam" id="3.40.50.300:FF:000422">
    <property type="entry name" value="Guanylate-binding protein 1"/>
    <property type="match status" value="1"/>
</dbReference>
<dbReference type="Gene3D" id="1.20.1000.10">
    <property type="entry name" value="Guanylate-binding protein, C-terminal domain"/>
    <property type="match status" value="1"/>
</dbReference>
<dbReference type="Gene3D" id="3.40.50.300">
    <property type="entry name" value="P-loop containing nucleotide triphosphate hydrolases"/>
    <property type="match status" value="1"/>
</dbReference>
<dbReference type="InterPro" id="IPR030386">
    <property type="entry name" value="G_GB1_RHD3_dom"/>
</dbReference>
<dbReference type="InterPro" id="IPR037684">
    <property type="entry name" value="GBP_C"/>
</dbReference>
<dbReference type="InterPro" id="IPR003191">
    <property type="entry name" value="Guanylate-bd/ATL_C"/>
</dbReference>
<dbReference type="InterPro" id="IPR036543">
    <property type="entry name" value="Guanylate-bd_C_sf"/>
</dbReference>
<dbReference type="InterPro" id="IPR015894">
    <property type="entry name" value="Guanylate-bd_N"/>
</dbReference>
<dbReference type="InterPro" id="IPR027417">
    <property type="entry name" value="P-loop_NTPase"/>
</dbReference>
<dbReference type="PANTHER" id="PTHR10751">
    <property type="entry name" value="GUANYLATE BINDING PROTEIN"/>
    <property type="match status" value="1"/>
</dbReference>
<dbReference type="Pfam" id="PF02263">
    <property type="entry name" value="GBP"/>
    <property type="match status" value="1"/>
</dbReference>
<dbReference type="Pfam" id="PF02841">
    <property type="entry name" value="GBP_C"/>
    <property type="match status" value="1"/>
</dbReference>
<dbReference type="SUPFAM" id="SSF48340">
    <property type="entry name" value="Interferon-induced guanylate-binding protein 1 (GBP1), C-terminal domain"/>
    <property type="match status" value="1"/>
</dbReference>
<dbReference type="SUPFAM" id="SSF52540">
    <property type="entry name" value="P-loop containing nucleoside triphosphate hydrolases"/>
    <property type="match status" value="1"/>
</dbReference>
<dbReference type="PROSITE" id="PS51715">
    <property type="entry name" value="G_GB1_RHD3"/>
    <property type="match status" value="1"/>
</dbReference>
<keyword id="KW-0002">3D-structure</keyword>
<keyword id="KW-0025">Alternative splicing</keyword>
<keyword id="KW-0929">Antimicrobial</keyword>
<keyword id="KW-0963">Cytoplasm</keyword>
<keyword id="KW-0968">Cytoplasmic vesicle</keyword>
<keyword id="KW-0325">Glycoprotein</keyword>
<keyword id="KW-0333">Golgi apparatus</keyword>
<keyword id="KW-0336">GPI-anchor</keyword>
<keyword id="KW-0342">GTP-binding</keyword>
<keyword id="KW-0378">Hydrolase</keyword>
<keyword id="KW-0391">Immunity</keyword>
<keyword id="KW-0395">Inflammatory response</keyword>
<keyword id="KW-0399">Innate immunity</keyword>
<keyword id="KW-0449">Lipoprotein</keyword>
<keyword id="KW-0472">Membrane</keyword>
<keyword id="KW-0488">Methylation</keyword>
<keyword id="KW-0547">Nucleotide-binding</keyword>
<keyword id="KW-0636">Prenylation</keyword>
<keyword id="KW-1267">Proteomics identification</keyword>
<keyword id="KW-1185">Reference proteome</keyword>